<accession>Q5X860</accession>
<sequence>MSSNQNIKIRLKSFDHRLIDLSTREIVDTAKRTGAQIRGPIPLPIRKEKFTVLTSPHVNKDARDQYELRTHKRLVVIVHPTEKTVDALMKLDLAAGVDVQISLDD</sequence>
<evidence type="ECO:0000255" key="1">
    <source>
        <dbReference type="HAMAP-Rule" id="MF_00508"/>
    </source>
</evidence>
<evidence type="ECO:0000305" key="2"/>
<protein>
    <recommendedName>
        <fullName evidence="1">Small ribosomal subunit protein uS10</fullName>
    </recommendedName>
    <alternativeName>
        <fullName evidence="2">30S ribosomal protein S10</fullName>
    </alternativeName>
</protein>
<reference key="1">
    <citation type="journal article" date="2004" name="Nat. Genet.">
        <title>Evidence in the Legionella pneumophila genome for exploitation of host cell functions and high genome plasticity.</title>
        <authorList>
            <person name="Cazalet C."/>
            <person name="Rusniok C."/>
            <person name="Brueggemann H."/>
            <person name="Zidane N."/>
            <person name="Magnier A."/>
            <person name="Ma L."/>
            <person name="Tichit M."/>
            <person name="Jarraud S."/>
            <person name="Bouchier C."/>
            <person name="Vandenesch F."/>
            <person name="Kunst F."/>
            <person name="Etienne J."/>
            <person name="Glaser P."/>
            <person name="Buchrieser C."/>
        </authorList>
    </citation>
    <scope>NUCLEOTIDE SEQUENCE [LARGE SCALE GENOMIC DNA]</scope>
    <source>
        <strain>Paris</strain>
    </source>
</reference>
<proteinExistence type="inferred from homology"/>
<organism>
    <name type="scientific">Legionella pneumophila (strain Paris)</name>
    <dbReference type="NCBI Taxonomy" id="297246"/>
    <lineage>
        <taxon>Bacteria</taxon>
        <taxon>Pseudomonadati</taxon>
        <taxon>Pseudomonadota</taxon>
        <taxon>Gammaproteobacteria</taxon>
        <taxon>Legionellales</taxon>
        <taxon>Legionellaceae</taxon>
        <taxon>Legionella</taxon>
    </lineage>
</organism>
<keyword id="KW-0687">Ribonucleoprotein</keyword>
<keyword id="KW-0689">Ribosomal protein</keyword>
<dbReference type="EMBL" id="CR628336">
    <property type="protein sequence ID" value="CAH11541.1"/>
    <property type="molecule type" value="Genomic_DNA"/>
</dbReference>
<dbReference type="RefSeq" id="WP_010946077.1">
    <property type="nucleotide sequence ID" value="NC_006368.1"/>
</dbReference>
<dbReference type="SMR" id="Q5X860"/>
<dbReference type="GeneID" id="57034331"/>
<dbReference type="KEGG" id="lpp:lpp0393"/>
<dbReference type="LegioList" id="lpp0393"/>
<dbReference type="HOGENOM" id="CLU_122625_1_3_6"/>
<dbReference type="GO" id="GO:1990904">
    <property type="term" value="C:ribonucleoprotein complex"/>
    <property type="evidence" value="ECO:0007669"/>
    <property type="project" value="UniProtKB-KW"/>
</dbReference>
<dbReference type="GO" id="GO:0005840">
    <property type="term" value="C:ribosome"/>
    <property type="evidence" value="ECO:0007669"/>
    <property type="project" value="UniProtKB-KW"/>
</dbReference>
<dbReference type="GO" id="GO:0003735">
    <property type="term" value="F:structural constituent of ribosome"/>
    <property type="evidence" value="ECO:0007669"/>
    <property type="project" value="InterPro"/>
</dbReference>
<dbReference type="GO" id="GO:0000049">
    <property type="term" value="F:tRNA binding"/>
    <property type="evidence" value="ECO:0007669"/>
    <property type="project" value="UniProtKB-UniRule"/>
</dbReference>
<dbReference type="GO" id="GO:0006412">
    <property type="term" value="P:translation"/>
    <property type="evidence" value="ECO:0007669"/>
    <property type="project" value="UniProtKB-UniRule"/>
</dbReference>
<dbReference type="FunFam" id="3.30.70.600:FF:000001">
    <property type="entry name" value="30S ribosomal protein S10"/>
    <property type="match status" value="1"/>
</dbReference>
<dbReference type="Gene3D" id="3.30.70.600">
    <property type="entry name" value="Ribosomal protein S10 domain"/>
    <property type="match status" value="1"/>
</dbReference>
<dbReference type="HAMAP" id="MF_00508">
    <property type="entry name" value="Ribosomal_uS10"/>
    <property type="match status" value="1"/>
</dbReference>
<dbReference type="InterPro" id="IPR001848">
    <property type="entry name" value="Ribosomal_uS10"/>
</dbReference>
<dbReference type="InterPro" id="IPR027486">
    <property type="entry name" value="Ribosomal_uS10_dom"/>
</dbReference>
<dbReference type="InterPro" id="IPR036838">
    <property type="entry name" value="Ribosomal_uS10_dom_sf"/>
</dbReference>
<dbReference type="NCBIfam" id="NF001861">
    <property type="entry name" value="PRK00596.1"/>
    <property type="match status" value="1"/>
</dbReference>
<dbReference type="NCBIfam" id="TIGR01049">
    <property type="entry name" value="rpsJ_bact"/>
    <property type="match status" value="1"/>
</dbReference>
<dbReference type="PANTHER" id="PTHR11700">
    <property type="entry name" value="30S RIBOSOMAL PROTEIN S10 FAMILY MEMBER"/>
    <property type="match status" value="1"/>
</dbReference>
<dbReference type="Pfam" id="PF00338">
    <property type="entry name" value="Ribosomal_S10"/>
    <property type="match status" value="1"/>
</dbReference>
<dbReference type="PRINTS" id="PR00971">
    <property type="entry name" value="RIBOSOMALS10"/>
</dbReference>
<dbReference type="SMART" id="SM01403">
    <property type="entry name" value="Ribosomal_S10"/>
    <property type="match status" value="1"/>
</dbReference>
<dbReference type="SUPFAM" id="SSF54999">
    <property type="entry name" value="Ribosomal protein S10"/>
    <property type="match status" value="1"/>
</dbReference>
<feature type="chain" id="PRO_0000237056" description="Small ribosomal subunit protein uS10">
    <location>
        <begin position="1"/>
        <end position="105"/>
    </location>
</feature>
<gene>
    <name evidence="1" type="primary">rpsJ</name>
    <name type="ordered locus">lpp0393</name>
</gene>
<name>RS10_LEGPA</name>
<comment type="function">
    <text evidence="1">Involved in the binding of tRNA to the ribosomes.</text>
</comment>
<comment type="subunit">
    <text evidence="1">Part of the 30S ribosomal subunit.</text>
</comment>
<comment type="similarity">
    <text evidence="1">Belongs to the universal ribosomal protein uS10 family.</text>
</comment>